<comment type="function">
    <text evidence="1">Involved in defense against toxic arsenate. Involved in the mycothiol/myoredoxin redox pathway which uses a mycothioltransferase mechanism; facilitates adduct formation between arsenate and mycothiol (By similarity).</text>
</comment>
<comment type="catalytic activity">
    <reaction>
        <text>mycothiol + arsenate = arseno-mycothiol + H2O</text>
        <dbReference type="Rhea" id="RHEA:27349"/>
        <dbReference type="ChEBI" id="CHEBI:15377"/>
        <dbReference type="ChEBI" id="CHEBI:16768"/>
        <dbReference type="ChEBI" id="CHEBI:48597"/>
        <dbReference type="ChEBI" id="CHEBI:59655"/>
        <dbReference type="EC" id="2.8.4.2"/>
    </reaction>
</comment>
<comment type="subcellular location">
    <subcellularLocation>
        <location evidence="1">Cytoplasm</location>
    </subcellularLocation>
</comment>
<comment type="similarity">
    <text evidence="2">Belongs to the low molecular weight phosphotyrosine protein phosphatase family.</text>
</comment>
<gene>
    <name type="primary">arsC1</name>
    <name type="ordered locus">WA5_1454</name>
</gene>
<accession>P0DKS6</accession>
<accession>Q6M575</accession>
<accession>Q8NQC7</accession>
<evidence type="ECO:0000250" key="1"/>
<evidence type="ECO:0000305" key="2"/>
<sequence length="140" mass="15117">MNNQPSVLFVCVGNGGKSQMAAALAKKHAGDALKVYSAGTKPGTKLNQQSLDSIAEVGADMSQGFPKGIDQELIKRVDRVVILGAEAQLEMPIDANGILQRWVTDEPSERGIEGMERMRLVRDDIDARVQNLVAELTQNA</sequence>
<name>ARSC1_CORGK</name>
<protein>
    <recommendedName>
        <fullName>Arsenate-mycothiol transferase ArsC1</fullName>
        <ecNumber>2.8.4.2</ecNumber>
    </recommendedName>
    <alternativeName>
        <fullName>Mycothiol-dependent arsenate reductase ArsC1</fullName>
    </alternativeName>
</protein>
<organism>
    <name type="scientific">Corynebacterium glutamicum (strain ATCC 13032 / K051)</name>
    <dbReference type="NCBI Taxonomy" id="1204414"/>
    <lineage>
        <taxon>Bacteria</taxon>
        <taxon>Bacillati</taxon>
        <taxon>Actinomycetota</taxon>
        <taxon>Actinomycetes</taxon>
        <taxon>Mycobacteriales</taxon>
        <taxon>Corynebacteriaceae</taxon>
        <taxon>Corynebacterium</taxon>
    </lineage>
</organism>
<proteinExistence type="inferred from homology"/>
<reference key="1">
    <citation type="journal article" date="2012" name="Genome Biol.">
        <title>A high-throughput approach to identify genomic variants of bacterial metabolite producers at the single-cell level.</title>
        <authorList>
            <person name="Binder S."/>
            <person name="Schendzielorz G."/>
            <person name="Stabler N."/>
            <person name="Krumbach K."/>
            <person name="Hoffmann K."/>
            <person name="Bott M."/>
            <person name="Eggeling L."/>
        </authorList>
    </citation>
    <scope>NUCLEOTIDE SEQUENCE [LARGE SCALE GENOMIC DNA]</scope>
    <source>
        <strain>ATCC 13032 / K051</strain>
    </source>
</reference>
<keyword id="KW-0059">Arsenical resistance</keyword>
<keyword id="KW-0963">Cytoplasm</keyword>
<keyword id="KW-0808">Transferase</keyword>
<feature type="chain" id="PRO_0000420635" description="Arsenate-mycothiol transferase ArsC1">
    <location>
        <begin position="1"/>
        <end position="140"/>
    </location>
</feature>
<dbReference type="EC" id="2.8.4.2"/>
<dbReference type="EMBL" id="HE802067">
    <property type="protein sequence ID" value="CCH24674.1"/>
    <property type="molecule type" value="Genomic_DNA"/>
</dbReference>
<dbReference type="RefSeq" id="WP_011014415.1">
    <property type="nucleotide sequence ID" value="NC_020519.1"/>
</dbReference>
<dbReference type="SMR" id="P0DKS6"/>
<dbReference type="KEGG" id="cgu:WA5_1454"/>
<dbReference type="PATRIC" id="fig|1204414.5.peg.1560"/>
<dbReference type="HOGENOM" id="CLU_071415_3_3_11"/>
<dbReference type="GO" id="GO:0005737">
    <property type="term" value="C:cytoplasm"/>
    <property type="evidence" value="ECO:0007669"/>
    <property type="project" value="UniProtKB-SubCell"/>
</dbReference>
<dbReference type="GO" id="GO:0102100">
    <property type="term" value="F:mycothiol-arsenate ligase activity"/>
    <property type="evidence" value="ECO:0007669"/>
    <property type="project" value="UniProtKB-EC"/>
</dbReference>
<dbReference type="GO" id="GO:0046685">
    <property type="term" value="P:response to arsenic-containing substance"/>
    <property type="evidence" value="ECO:0007669"/>
    <property type="project" value="UniProtKB-KW"/>
</dbReference>
<dbReference type="Gene3D" id="3.40.50.2300">
    <property type="match status" value="1"/>
</dbReference>
<dbReference type="InterPro" id="IPR023485">
    <property type="entry name" value="Ptyr_pPase"/>
</dbReference>
<dbReference type="InterPro" id="IPR036196">
    <property type="entry name" value="Ptyr_pPase_sf"/>
</dbReference>
<dbReference type="PANTHER" id="PTHR43428">
    <property type="entry name" value="ARSENATE REDUCTASE"/>
    <property type="match status" value="1"/>
</dbReference>
<dbReference type="PANTHER" id="PTHR43428:SF1">
    <property type="entry name" value="ARSENATE REDUCTASE"/>
    <property type="match status" value="1"/>
</dbReference>
<dbReference type="Pfam" id="PF01451">
    <property type="entry name" value="LMWPc"/>
    <property type="match status" value="1"/>
</dbReference>
<dbReference type="SMART" id="SM00226">
    <property type="entry name" value="LMWPc"/>
    <property type="match status" value="1"/>
</dbReference>
<dbReference type="SUPFAM" id="SSF52788">
    <property type="entry name" value="Phosphotyrosine protein phosphatases I"/>
    <property type="match status" value="1"/>
</dbReference>